<evidence type="ECO:0000255" key="1">
    <source>
        <dbReference type="HAMAP-Rule" id="MF_00675"/>
    </source>
</evidence>
<dbReference type="EC" id="5.3.1.12" evidence="1"/>
<dbReference type="EMBL" id="AF266466">
    <property type="protein sequence ID" value="AAF77061.1"/>
    <property type="molecule type" value="Genomic_DNA"/>
</dbReference>
<dbReference type="EMBL" id="CP001037">
    <property type="protein sequence ID" value="ACC83652.1"/>
    <property type="molecule type" value="Genomic_DNA"/>
</dbReference>
<dbReference type="RefSeq" id="WP_012411603.1">
    <property type="nucleotide sequence ID" value="NC_010628.1"/>
</dbReference>
<dbReference type="SMR" id="Q9KHA1"/>
<dbReference type="STRING" id="63737.Npun_F5333"/>
<dbReference type="EnsemblBacteria" id="ACC83652">
    <property type="protein sequence ID" value="ACC83652"/>
    <property type="gene ID" value="Npun_F5333"/>
</dbReference>
<dbReference type="KEGG" id="npu:Npun_F5333"/>
<dbReference type="eggNOG" id="COG1904">
    <property type="taxonomic scope" value="Bacteria"/>
</dbReference>
<dbReference type="HOGENOM" id="CLU_044465_0_0_3"/>
<dbReference type="OrthoDB" id="9766564at2"/>
<dbReference type="UniPathway" id="UPA00246"/>
<dbReference type="Proteomes" id="UP000001191">
    <property type="component" value="Chromosome"/>
</dbReference>
<dbReference type="GO" id="GO:0008880">
    <property type="term" value="F:glucuronate isomerase activity"/>
    <property type="evidence" value="ECO:0007669"/>
    <property type="project" value="UniProtKB-UniRule"/>
</dbReference>
<dbReference type="GO" id="GO:0019698">
    <property type="term" value="P:D-galacturonate catabolic process"/>
    <property type="evidence" value="ECO:0007669"/>
    <property type="project" value="TreeGrafter"/>
</dbReference>
<dbReference type="GO" id="GO:0042840">
    <property type="term" value="P:D-glucuronate catabolic process"/>
    <property type="evidence" value="ECO:0007669"/>
    <property type="project" value="TreeGrafter"/>
</dbReference>
<dbReference type="Gene3D" id="3.20.20.140">
    <property type="entry name" value="Metal-dependent hydrolases"/>
    <property type="match status" value="1"/>
</dbReference>
<dbReference type="Gene3D" id="1.10.2020.10">
    <property type="entry name" value="uronate isomerase, domain 2, chain A"/>
    <property type="match status" value="1"/>
</dbReference>
<dbReference type="HAMAP" id="MF_00675">
    <property type="entry name" value="UxaC"/>
    <property type="match status" value="1"/>
</dbReference>
<dbReference type="InterPro" id="IPR032466">
    <property type="entry name" value="Metal_Hydrolase"/>
</dbReference>
<dbReference type="InterPro" id="IPR003766">
    <property type="entry name" value="Uronate_isomerase"/>
</dbReference>
<dbReference type="NCBIfam" id="NF002794">
    <property type="entry name" value="PRK02925.1"/>
    <property type="match status" value="1"/>
</dbReference>
<dbReference type="PANTHER" id="PTHR30068">
    <property type="entry name" value="URONATE ISOMERASE"/>
    <property type="match status" value="1"/>
</dbReference>
<dbReference type="PANTHER" id="PTHR30068:SF4">
    <property type="entry name" value="URONATE ISOMERASE"/>
    <property type="match status" value="1"/>
</dbReference>
<dbReference type="Pfam" id="PF02614">
    <property type="entry name" value="UxaC"/>
    <property type="match status" value="1"/>
</dbReference>
<dbReference type="SUPFAM" id="SSF51556">
    <property type="entry name" value="Metallo-dependent hydrolases"/>
    <property type="match status" value="1"/>
</dbReference>
<name>UXAC_NOSP7</name>
<comment type="catalytic activity">
    <reaction evidence="1">
        <text>D-glucuronate = D-fructuronate</text>
        <dbReference type="Rhea" id="RHEA:13049"/>
        <dbReference type="ChEBI" id="CHEBI:58720"/>
        <dbReference type="ChEBI" id="CHEBI:59863"/>
        <dbReference type="EC" id="5.3.1.12"/>
    </reaction>
</comment>
<comment type="catalytic activity">
    <reaction evidence="1">
        <text>aldehydo-D-galacturonate = keto-D-tagaturonate</text>
        <dbReference type="Rhea" id="RHEA:27702"/>
        <dbReference type="ChEBI" id="CHEBI:12952"/>
        <dbReference type="ChEBI" id="CHEBI:17886"/>
        <dbReference type="EC" id="5.3.1.12"/>
    </reaction>
</comment>
<comment type="pathway">
    <text evidence="1">Carbohydrate metabolism; pentose and glucuronate interconversion.</text>
</comment>
<comment type="similarity">
    <text evidence="1">Belongs to the metallo-dependent hydrolases superfamily. Uronate isomerase family.</text>
</comment>
<accession>Q9KHA1</accession>
<accession>B2J4G2</accession>
<reference key="1">
    <citation type="submission" date="2000-05" db="EMBL/GenBank/DDBJ databases">
        <authorList>
            <person name="Campbell E.L."/>
            <person name="Meeks J.C."/>
            <person name="Wong F.C."/>
        </authorList>
    </citation>
    <scope>NUCLEOTIDE SEQUENCE [GENOMIC DNA]</scope>
</reference>
<reference key="2">
    <citation type="journal article" date="2013" name="Plant Physiol.">
        <title>A Nostoc punctiforme Sugar Transporter Necessary to Establish a Cyanobacterium-Plant Symbiosis.</title>
        <authorList>
            <person name="Ekman M."/>
            <person name="Picossi S."/>
            <person name="Campbell E.L."/>
            <person name="Meeks J.C."/>
            <person name="Flores E."/>
        </authorList>
    </citation>
    <scope>NUCLEOTIDE SEQUENCE [LARGE SCALE GENOMIC DNA]</scope>
    <source>
        <strain>ATCC 29133 / PCC 73102</strain>
    </source>
</reference>
<protein>
    <recommendedName>
        <fullName evidence="1">Uronate isomerase</fullName>
        <ecNumber evidence="1">5.3.1.12</ecNumber>
    </recommendedName>
    <alternativeName>
        <fullName evidence="1">Glucuronate isomerase</fullName>
    </alternativeName>
    <alternativeName>
        <fullName evidence="1">Uronic isomerase</fullName>
    </alternativeName>
</protein>
<gene>
    <name evidence="1" type="primary">uxaC</name>
    <name type="synonym">hrmI</name>
    <name type="ordered locus">Npun_F5333</name>
</gene>
<sequence>MLTKKPVLSPDRCFSPEPVQRRLAHQFFDSISALPLVCPHGHVDPALLANPAARFGSPTELFIIPDHYILRMLYSRGVPLEALGIPTRDAPTETDHRKIWQLFAEHFYLFQGTPSGLWLKDELTNVFGVDEALNSRNAGRIYDYLEGLLALPKFSPRALFKRFNIEVLCTTDAASDNLENQRSLHEEGFTQIRPTFRPDAVVNLDAPGWRENLTKLESSIGREISSYATFVQALEERRAFFKKMGATATDQGAATPYTTSLSDQEAEAIFARALIGKLNPGDVEQFTGHIFMEMARMSVEDGLVMQMHCGVMRNHNPALFERFGSDKGADIPLNIEWTRNLHPLLSSYGNNQRFRLIIFGMDESTYSREMAPLAGHYPTILLGPPWWFHDSVNGMERYFNQVMETAGIYNTAGFNDDTRAFVSIPARHNVWRRVACNWLAGLVTRGLVDEEEGYDMARALAYDLAKSAYKLD</sequence>
<feature type="chain" id="PRO_0000172777" description="Uronate isomerase">
    <location>
        <begin position="1"/>
        <end position="472"/>
    </location>
</feature>
<organism>
    <name type="scientific">Nostoc punctiforme (strain ATCC 29133 / PCC 73102)</name>
    <dbReference type="NCBI Taxonomy" id="63737"/>
    <lineage>
        <taxon>Bacteria</taxon>
        <taxon>Bacillati</taxon>
        <taxon>Cyanobacteriota</taxon>
        <taxon>Cyanophyceae</taxon>
        <taxon>Nostocales</taxon>
        <taxon>Nostocaceae</taxon>
        <taxon>Nostoc</taxon>
    </lineage>
</organism>
<keyword id="KW-0413">Isomerase</keyword>
<keyword id="KW-1185">Reference proteome</keyword>
<proteinExistence type="inferred from homology"/>